<keyword id="KW-0150">Chloroplast</keyword>
<keyword id="KW-0472">Membrane</keyword>
<keyword id="KW-0934">Plastid</keyword>
<keyword id="KW-1185">Reference proteome</keyword>
<keyword id="KW-0677">Repeat</keyword>
<keyword id="KW-0793">Thylakoid</keyword>
<keyword id="KW-0809">Transit peptide</keyword>
<keyword id="KW-0812">Transmembrane</keyword>
<keyword id="KW-1133">Transmembrane helix</keyword>
<sequence length="159" mass="17203">MLTAPSLSRFKSPFISSPLKLPTLSSSFFTQKFHQTCRRRNSYPCIKAVDLDQNTVIAITVGVLSVAIGVGIPVFYETQIDNAAKRENTQPCFPCTGTGAQKCRFCMGTGSVTVELGGGETEVSRCINCDGAGGLTCTTCQGSGIQPRYLDRREFKDDD</sequence>
<protein>
    <recommendedName>
        <fullName evidence="4">Protein SPA, chloroplastic</fullName>
    </recommendedName>
    <alternativeName>
        <fullName evidence="4">Sugar partition-affecting protein</fullName>
    </alternativeName>
</protein>
<comment type="function">
    <text evidence="3">Participates in determining harvest index (HI) by affecting source-sink carbon distribution. Up-regulates the conversion of fixed carbon to exportable sugars.</text>
</comment>
<comment type="subcellular location">
    <subcellularLocation>
        <location evidence="3">Plastid</location>
        <location evidence="3">Chloroplast thylakoid membrane</location>
        <topology evidence="2">Single-pass membrane protein</topology>
    </subcellularLocation>
</comment>
<comment type="tissue specificity">
    <text evidence="3">Expressed in source leaves. Lower levels of expression in fruits and stems.</text>
</comment>
<comment type="miscellaneous">
    <text evidence="1">Its sequence is related to the DnaJ family but lacks the J domain. The CR-type-like region is similar to CR-type zinc-fingers and was shown to bind zinc.</text>
</comment>
<reference key="1">
    <citation type="journal article" date="2012" name="Nature">
        <title>The tomato genome sequence provides insights into fleshy fruit evolution.</title>
        <authorList>
            <consortium name="Tomato Genome Consortium"/>
        </authorList>
    </citation>
    <scope>NUCLEOTIDE SEQUENCE [LARGE SCALE GENOMIC DNA]</scope>
    <source>
        <strain>cv. Heinz 1706</strain>
    </source>
</reference>
<reference key="2">
    <citation type="journal article" date="2014" name="Plant J.">
        <title>Silencing of the tomato sugar partitioning affecting protein (SPA) modifies sink strength through a shift in leaf sugar metabolism.</title>
        <authorList>
            <person name="Bermudez L."/>
            <person name="de Godoy F."/>
            <person name="Baldet P."/>
            <person name="Demarco D."/>
            <person name="Osorio S."/>
            <person name="Quadrana L."/>
            <person name="Almeida J."/>
            <person name="Asis R."/>
            <person name="Gibon Y."/>
            <person name="Fernie A.R."/>
            <person name="Rossi M."/>
            <person name="Carrari F."/>
        </authorList>
    </citation>
    <scope>FUNCTION</scope>
    <scope>SUBCELLULAR LOCATION</scope>
    <scope>TISSUE SPECIFICITY</scope>
</reference>
<dbReference type="RefSeq" id="NP_001307325.1">
    <property type="nucleotide sequence ID" value="NM_001320396.1"/>
</dbReference>
<dbReference type="FunCoup" id="K4BVL1">
    <property type="interactions" value="1259"/>
</dbReference>
<dbReference type="STRING" id="4081.K4BVL1"/>
<dbReference type="PaxDb" id="4081-Solyc04g081320.2.1"/>
<dbReference type="GeneID" id="101259741"/>
<dbReference type="KEGG" id="sly:101259741"/>
<dbReference type="eggNOG" id="ENOG502RY5W">
    <property type="taxonomic scope" value="Eukaryota"/>
</dbReference>
<dbReference type="HOGENOM" id="CLU_118793_0_0_1"/>
<dbReference type="InParanoid" id="K4BVL1"/>
<dbReference type="OrthoDB" id="4733at2759"/>
<dbReference type="PhylomeDB" id="K4BVL1"/>
<dbReference type="Proteomes" id="UP000004994">
    <property type="component" value="Unplaced"/>
</dbReference>
<dbReference type="ExpressionAtlas" id="K4BVL1">
    <property type="expression patterns" value="baseline and differential"/>
</dbReference>
<dbReference type="GO" id="GO:0009507">
    <property type="term" value="C:chloroplast"/>
    <property type="evidence" value="ECO:0000318"/>
    <property type="project" value="GO_Central"/>
</dbReference>
<dbReference type="GO" id="GO:0009535">
    <property type="term" value="C:chloroplast thylakoid membrane"/>
    <property type="evidence" value="ECO:0007669"/>
    <property type="project" value="UniProtKB-SubCell"/>
</dbReference>
<dbReference type="GO" id="GO:0003756">
    <property type="term" value="F:protein disulfide isomerase activity"/>
    <property type="evidence" value="ECO:0000318"/>
    <property type="project" value="GO_Central"/>
</dbReference>
<dbReference type="GO" id="GO:0010206">
    <property type="term" value="P:photosystem II repair"/>
    <property type="evidence" value="ECO:0000318"/>
    <property type="project" value="GO_Central"/>
</dbReference>
<dbReference type="InterPro" id="IPR035272">
    <property type="entry name" value="DUF5351"/>
</dbReference>
<dbReference type="InterPro" id="IPR036410">
    <property type="entry name" value="HSP_DnaJ_Cys-rich_dom_sf"/>
</dbReference>
<dbReference type="PANTHER" id="PTHR15852">
    <property type="entry name" value="PLASTID TRANSCRIPTIONALLY ACTIVE PROTEIN"/>
    <property type="match status" value="1"/>
</dbReference>
<dbReference type="PANTHER" id="PTHR15852:SF27">
    <property type="entry name" value="PROTEIN DISULFIDE-ISOMERASE LQY1, CHLOROPLASTIC"/>
    <property type="match status" value="1"/>
</dbReference>
<dbReference type="Pfam" id="PF17302">
    <property type="entry name" value="DUF5351"/>
    <property type="match status" value="1"/>
</dbReference>
<dbReference type="SUPFAM" id="SSF57938">
    <property type="entry name" value="DnaJ/Hsp40 cysteine-rich domain"/>
    <property type="match status" value="1"/>
</dbReference>
<feature type="transit peptide" description="Chloroplast" evidence="5">
    <location>
        <begin position="1"/>
        <end position="47"/>
    </location>
</feature>
<feature type="chain" id="PRO_0000431977" description="Protein SPA, chloroplastic" evidence="2">
    <location>
        <begin position="48"/>
        <end position="159"/>
    </location>
</feature>
<feature type="transmembrane region" description="Helical" evidence="2">
    <location>
        <begin position="56"/>
        <end position="76"/>
    </location>
</feature>
<feature type="repeat" description="CXXCXGXG motif">
    <location>
        <begin position="92"/>
        <end position="99"/>
    </location>
</feature>
<feature type="repeat" description="CXXCXGXG motif">
    <location>
        <begin position="103"/>
        <end position="110"/>
    </location>
</feature>
<feature type="repeat" description="CXXCXGXG motif">
    <location>
        <begin position="126"/>
        <end position="133"/>
    </location>
</feature>
<feature type="repeat" description="CXXCXGXG motif">
    <location>
        <begin position="137"/>
        <end position="144"/>
    </location>
</feature>
<feature type="region of interest" description="CR-type-like">
    <location>
        <begin position="85"/>
        <end position="145"/>
    </location>
</feature>
<accession>K4BVL1</accession>
<proteinExistence type="evidence at transcript level"/>
<organism evidence="6">
    <name type="scientific">Solanum lycopersicum</name>
    <name type="common">Tomato</name>
    <name type="synonym">Lycopersicon esculentum</name>
    <dbReference type="NCBI Taxonomy" id="4081"/>
    <lineage>
        <taxon>Eukaryota</taxon>
        <taxon>Viridiplantae</taxon>
        <taxon>Streptophyta</taxon>
        <taxon>Embryophyta</taxon>
        <taxon>Tracheophyta</taxon>
        <taxon>Spermatophyta</taxon>
        <taxon>Magnoliopsida</taxon>
        <taxon>eudicotyledons</taxon>
        <taxon>Gunneridae</taxon>
        <taxon>Pentapetalae</taxon>
        <taxon>asterids</taxon>
        <taxon>lamiids</taxon>
        <taxon>Solanales</taxon>
        <taxon>Solanaceae</taxon>
        <taxon>Solanoideae</taxon>
        <taxon>Solaneae</taxon>
        <taxon>Solanum</taxon>
        <taxon>Solanum subgen. Lycopersicon</taxon>
    </lineage>
</organism>
<name>SPA_SOLLC</name>
<evidence type="ECO:0000250" key="1">
    <source>
        <dbReference type="UniProtKB" id="Q8GSJ6"/>
    </source>
</evidence>
<evidence type="ECO:0000255" key="2"/>
<evidence type="ECO:0000269" key="3">
    <source>
    </source>
</evidence>
<evidence type="ECO:0000303" key="4">
    <source>
    </source>
</evidence>
<evidence type="ECO:0000305" key="5"/>
<evidence type="ECO:0000312" key="6">
    <source>
        <dbReference type="Proteomes" id="UP000004994"/>
    </source>
</evidence>
<gene>
    <name evidence="4" type="primary">SPA</name>
    <name type="ordered locus">Solyc04g081320</name>
</gene>